<keyword id="KW-0903">Direct protein sequencing</keyword>
<keyword id="KW-0249">Electron transport</keyword>
<keyword id="KW-0349">Heme</keyword>
<keyword id="KW-0408">Iron</keyword>
<keyword id="KW-0472">Membrane</keyword>
<keyword id="KW-0479">Metal-binding</keyword>
<keyword id="KW-0496">Mitochondrion</keyword>
<keyword id="KW-0999">Mitochondrion inner membrane</keyword>
<keyword id="KW-1185">Reference proteome</keyword>
<keyword id="KW-0809">Transit peptide</keyword>
<keyword id="KW-0812">Transmembrane</keyword>
<keyword id="KW-1133">Transmembrane helix</keyword>
<keyword id="KW-0813">Transport</keyword>
<keyword id="KW-0816">Tricarboxylic acid cycle</keyword>
<dbReference type="EMBL" id="S74803">
    <property type="protein sequence ID" value="AAB32390.1"/>
    <property type="molecule type" value="mRNA"/>
</dbReference>
<dbReference type="EMBL" id="BC102062">
    <property type="protein sequence ID" value="AAI02063.1"/>
    <property type="molecule type" value="mRNA"/>
</dbReference>
<dbReference type="EMBL" id="BT025477">
    <property type="protein sequence ID" value="ABF57433.1"/>
    <property type="molecule type" value="mRNA"/>
</dbReference>
<dbReference type="EMBL" id="M76747">
    <property type="protein sequence ID" value="AAA21608.1"/>
    <property type="molecule type" value="mRNA"/>
</dbReference>
<dbReference type="PIR" id="A45159">
    <property type="entry name" value="A45159"/>
</dbReference>
<dbReference type="RefSeq" id="NP_787008.1">
    <property type="nucleotide sequence ID" value="NM_175814.3"/>
</dbReference>
<dbReference type="SMR" id="P35720"/>
<dbReference type="CORUM" id="P35720"/>
<dbReference type="FunCoup" id="P35720">
    <property type="interactions" value="2118"/>
</dbReference>
<dbReference type="IntAct" id="P35720">
    <property type="interactions" value="4"/>
</dbReference>
<dbReference type="STRING" id="9913.ENSBTAP00000021075"/>
<dbReference type="PaxDb" id="9913-ENSBTAP00000021075"/>
<dbReference type="PeptideAtlas" id="P35720"/>
<dbReference type="Ensembl" id="ENSBTAT00000021075.5">
    <property type="protein sequence ID" value="ENSBTAP00000021075.4"/>
    <property type="gene ID" value="ENSBTAG00000015853.6"/>
</dbReference>
<dbReference type="GeneID" id="327696"/>
<dbReference type="KEGG" id="bta:327696"/>
<dbReference type="CTD" id="6391"/>
<dbReference type="VEuPathDB" id="HostDB:ENSBTAG00000015853"/>
<dbReference type="VGNC" id="VGNC:34392">
    <property type="gene designation" value="SDHC"/>
</dbReference>
<dbReference type="eggNOG" id="KOG0449">
    <property type="taxonomic scope" value="Eukaryota"/>
</dbReference>
<dbReference type="GeneTree" id="ENSGT00390000000566"/>
<dbReference type="HOGENOM" id="CLU_094691_1_1_1"/>
<dbReference type="InParanoid" id="P35720"/>
<dbReference type="OMA" id="MNGIRHL"/>
<dbReference type="OrthoDB" id="588261at2759"/>
<dbReference type="TreeFam" id="TF313317"/>
<dbReference type="Reactome" id="R-BTA-71403">
    <property type="pathway name" value="Citric acid cycle (TCA cycle)"/>
</dbReference>
<dbReference type="Reactome" id="R-BTA-9854311">
    <property type="pathway name" value="Maturation of TCA enzymes and regulation of TCA cycle"/>
</dbReference>
<dbReference type="UniPathway" id="UPA00223"/>
<dbReference type="Proteomes" id="UP000009136">
    <property type="component" value="Chromosome 3"/>
</dbReference>
<dbReference type="Bgee" id="ENSBTAG00000015853">
    <property type="expression patterns" value="Expressed in supraspinatus muscle and 106 other cell types or tissues"/>
</dbReference>
<dbReference type="GO" id="GO:0005743">
    <property type="term" value="C:mitochondrial inner membrane"/>
    <property type="evidence" value="ECO:0000250"/>
    <property type="project" value="UniProtKB"/>
</dbReference>
<dbReference type="GO" id="GO:0045273">
    <property type="term" value="C:respiratory chain complex II (succinate dehydrogenase)"/>
    <property type="evidence" value="ECO:0000250"/>
    <property type="project" value="UniProtKB"/>
</dbReference>
<dbReference type="GO" id="GO:0009055">
    <property type="term" value="F:electron transfer activity"/>
    <property type="evidence" value="ECO:0007669"/>
    <property type="project" value="InterPro"/>
</dbReference>
<dbReference type="GO" id="GO:0020037">
    <property type="term" value="F:heme binding"/>
    <property type="evidence" value="ECO:0000250"/>
    <property type="project" value="UniProtKB"/>
</dbReference>
<dbReference type="GO" id="GO:0046872">
    <property type="term" value="F:metal ion binding"/>
    <property type="evidence" value="ECO:0007669"/>
    <property type="project" value="UniProtKB-KW"/>
</dbReference>
<dbReference type="GO" id="GO:0006121">
    <property type="term" value="P:mitochondrial electron transport, succinate to ubiquinone"/>
    <property type="evidence" value="ECO:0000318"/>
    <property type="project" value="GO_Central"/>
</dbReference>
<dbReference type="GO" id="GO:0006099">
    <property type="term" value="P:tricarboxylic acid cycle"/>
    <property type="evidence" value="ECO:0007669"/>
    <property type="project" value="UniProtKB-UniPathway"/>
</dbReference>
<dbReference type="CDD" id="cd03499">
    <property type="entry name" value="SQR_TypeC_SdhC"/>
    <property type="match status" value="1"/>
</dbReference>
<dbReference type="FunFam" id="1.20.1300.10:FF:000006">
    <property type="entry name" value="Succinate dehydrogenase cytochrome b560 subunit, mitochondrial"/>
    <property type="match status" value="1"/>
</dbReference>
<dbReference type="FunFam" id="1.20.5.540:FF:000002">
    <property type="entry name" value="Succinate dehydrogenase cytochrome b560 subunit, mitochondrial"/>
    <property type="match status" value="1"/>
</dbReference>
<dbReference type="Gene3D" id="1.20.1300.10">
    <property type="entry name" value="Fumarate reductase/succinate dehydrogenase, transmembrane subunit"/>
    <property type="match status" value="1"/>
</dbReference>
<dbReference type="Gene3D" id="1.20.5.540">
    <property type="entry name" value="Single helix bin"/>
    <property type="match status" value="1"/>
</dbReference>
<dbReference type="InterPro" id="IPR034804">
    <property type="entry name" value="SQR/QFR_C/D"/>
</dbReference>
<dbReference type="InterPro" id="IPR018495">
    <property type="entry name" value="Succ_DH_cyt_bsu_CS"/>
</dbReference>
<dbReference type="InterPro" id="IPR014314">
    <property type="entry name" value="Succ_DH_cytb556"/>
</dbReference>
<dbReference type="InterPro" id="IPR000701">
    <property type="entry name" value="SuccDH_FuR_B_TM-su"/>
</dbReference>
<dbReference type="NCBIfam" id="TIGR02970">
    <property type="entry name" value="succ_dehyd_cytB"/>
    <property type="match status" value="1"/>
</dbReference>
<dbReference type="PANTHER" id="PTHR10978">
    <property type="entry name" value="SUCCINATE DEHYDROGENASE CYTOCHROME B560 SUBUNIT"/>
    <property type="match status" value="1"/>
</dbReference>
<dbReference type="PANTHER" id="PTHR10978:SF5">
    <property type="entry name" value="SUCCINATE DEHYDROGENASE CYTOCHROME B560 SUBUNIT, MITOCHONDRIAL"/>
    <property type="match status" value="1"/>
</dbReference>
<dbReference type="Pfam" id="PF01127">
    <property type="entry name" value="Sdh_cyt"/>
    <property type="match status" value="1"/>
</dbReference>
<dbReference type="SUPFAM" id="SSF81343">
    <property type="entry name" value="Fumarate reductase respiratory complex transmembrane subunits"/>
    <property type="match status" value="1"/>
</dbReference>
<dbReference type="PROSITE" id="PS01000">
    <property type="entry name" value="SDH_CYT_1"/>
    <property type="match status" value="1"/>
</dbReference>
<dbReference type="PROSITE" id="PS01001">
    <property type="entry name" value="SDH_CYT_2"/>
    <property type="match status" value="1"/>
</dbReference>
<name>C560_BOVIN</name>
<organism>
    <name type="scientific">Bos taurus</name>
    <name type="common">Bovine</name>
    <dbReference type="NCBI Taxonomy" id="9913"/>
    <lineage>
        <taxon>Eukaryota</taxon>
        <taxon>Metazoa</taxon>
        <taxon>Chordata</taxon>
        <taxon>Craniata</taxon>
        <taxon>Vertebrata</taxon>
        <taxon>Euteleostomi</taxon>
        <taxon>Mammalia</taxon>
        <taxon>Eutheria</taxon>
        <taxon>Laurasiatheria</taxon>
        <taxon>Artiodactyla</taxon>
        <taxon>Ruminantia</taxon>
        <taxon>Pecora</taxon>
        <taxon>Bovidae</taxon>
        <taxon>Bovinae</taxon>
        <taxon>Bos</taxon>
    </lineage>
</organism>
<sequence length="169" mass="18389">MAALLLRHVGRHCLRAHLSPQLCIRNAVPLGTTAKEEMERFWSKNTTLNRPLSPHISIYGWSLPMAMSICHRGTGIALSAGVSLFGLSALLVPGSFESHLEFVKSLCLGPALIHTAKFALVFPLMYHTWNGIRHLMWDLGKGLTISQLHQSGVAVLVLTVLSSVGLAAM</sequence>
<reference key="1">
    <citation type="journal article" date="1994" name="Biochim. Biophys. Acta">
        <title>The cDNA sequence of beef heart CII-3, a membrane-intrinsic subunit of succinate-ubiquinone oxidoreductase.</title>
        <authorList>
            <person name="Cochran B."/>
            <person name="Capaldi R.A."/>
            <person name="Ackrell B.A."/>
        </authorList>
    </citation>
    <scope>NUCLEOTIDE SEQUENCE [MRNA]</scope>
    <scope>PROTEIN SEQUENCE OF 30-36</scope>
    <source>
        <tissue>Heart</tissue>
    </source>
</reference>
<reference key="2">
    <citation type="submission" date="2005-08" db="EMBL/GenBank/DDBJ databases">
        <authorList>
            <consortium name="NIH - Mammalian Gene Collection (MGC) project"/>
        </authorList>
    </citation>
    <scope>NUCLEOTIDE SEQUENCE [LARGE SCALE MRNA]</scope>
    <source>
        <strain>Crossbred X Angus</strain>
        <tissue>Ileum</tissue>
    </source>
</reference>
<reference key="3">
    <citation type="journal article" date="2005" name="BMC Genomics">
        <title>Characterization of 954 bovine full-CDS cDNA sequences.</title>
        <authorList>
            <person name="Harhay G.P."/>
            <person name="Sonstegard T.S."/>
            <person name="Keele J.W."/>
            <person name="Heaton M.P."/>
            <person name="Clawson M.L."/>
            <person name="Snelling W.M."/>
            <person name="Wiedmann R.T."/>
            <person name="Van Tassell C.P."/>
            <person name="Smith T.P.L."/>
        </authorList>
    </citation>
    <scope>NUCLEOTIDE SEQUENCE [LARGE SCALE MRNA] OF 2-169</scope>
</reference>
<reference key="4">
    <citation type="journal article" date="1992" name="J. Biol. Chem.">
        <title>Cytochrome b560 (QPs1) of mitochondrial succinate-ubiquinone reductase. Immunochemistry, cloning, and nucleotide sequencing.</title>
        <authorList>
            <person name="Yu L."/>
            <person name="Wei Y.-Y."/>
            <person name="Usui S."/>
            <person name="Yu C.-A."/>
        </authorList>
    </citation>
    <scope>NUCLEOTIDE SEQUENCE [MRNA] OF 38-169</scope>
    <source>
        <tissue>Heart</tissue>
    </source>
</reference>
<reference key="5">
    <citation type="journal article" date="1995" name="J. Biol. Chem.">
        <title>Identification of the ubiquinone-binding domain in QPs1 of succinate-ubiquinone reductase.</title>
        <authorList>
            <person name="Lee G.Y."/>
            <person name="He D.Y."/>
            <person name="Yu L."/>
            <person name="Yu C.A."/>
        </authorList>
    </citation>
    <scope>PROTEIN SEQUENCE OF 30-169</scope>
    <source>
        <tissue>Heart</tissue>
    </source>
</reference>
<reference key="6">
    <citation type="journal article" date="1988" name="Biochim. Biophys. Acta">
        <title>Oxidation of malate by the mitochondrial succinate-ubiquinone reductase.</title>
        <authorList>
            <person name="Belikova Y.O."/>
            <person name="Kotlyar A.B."/>
            <person name="Vinogradov A.D."/>
        </authorList>
    </citation>
    <scope>FUNCTION</scope>
</reference>
<reference key="7">
    <citation type="journal article" date="1991" name="FEBS Lett.">
        <title>Direct demonstration of enol-oxaloacetate as an immediate product of malate oxidation by the mammalian succinate dehydrogenase.</title>
        <authorList>
            <person name="Panchenko M.V."/>
            <person name="Vinogradov A.D."/>
        </authorList>
    </citation>
    <scope>FUNCTION</scope>
</reference>
<proteinExistence type="evidence at protein level"/>
<protein>
    <recommendedName>
        <fullName>Succinate dehydrogenase cytochrome b560 subunit, mitochondrial</fullName>
    </recommendedName>
    <alternativeName>
        <fullName>Integral membrane protein CII-3</fullName>
    </alternativeName>
    <alternativeName>
        <fullName evidence="7">Malate dehydrogenase [quinone] cytochrome b560 subunit</fullName>
    </alternativeName>
    <alternativeName>
        <fullName>QPs-1</fullName>
        <shortName>QPs1</shortName>
    </alternativeName>
    <alternativeName>
        <fullName>Succinate dehydrogenase complex subunit C</fullName>
    </alternativeName>
</protein>
<feature type="transit peptide" description="Mitochondrion" evidence="5 6">
    <location>
        <begin position="1"/>
        <end position="29"/>
    </location>
</feature>
<feature type="chain" id="PRO_0000003632" description="Succinate dehydrogenase cytochrome b560 subunit, mitochondrial">
    <location>
        <begin position="30"/>
        <end position="169"/>
    </location>
</feature>
<feature type="topological domain" description="Mitochondrial matrix" evidence="1">
    <location>
        <begin position="30"/>
        <end position="62"/>
    </location>
</feature>
<feature type="transmembrane region" description="Helical" evidence="1">
    <location>
        <begin position="63"/>
        <end position="92"/>
    </location>
</feature>
<feature type="topological domain" description="Mitochondrial intermembrane" evidence="1">
    <location>
        <begin position="93"/>
        <end position="112"/>
    </location>
</feature>
<feature type="transmembrane region" description="Helical" evidence="1">
    <location>
        <begin position="113"/>
        <end position="137"/>
    </location>
</feature>
<feature type="topological domain" description="Mitochondrial matrix" evidence="1">
    <location>
        <begin position="138"/>
        <end position="144"/>
    </location>
</feature>
<feature type="transmembrane region" description="Helical" evidence="1">
    <location>
        <begin position="145"/>
        <end position="166"/>
    </location>
</feature>
<feature type="topological domain" description="Mitochondrial intermembrane" evidence="1">
    <location>
        <begin position="167"/>
        <end position="169"/>
    </location>
</feature>
<feature type="binding site" description="axial binding residue" evidence="1">
    <location>
        <position position="127"/>
    </location>
    <ligand>
        <name>heme b</name>
        <dbReference type="ChEBI" id="CHEBI:60344"/>
        <note>ligand shared with SDHD</note>
    </ligand>
    <ligandPart>
        <name>Fe</name>
        <dbReference type="ChEBI" id="CHEBI:18248"/>
    </ligandPart>
</feature>
<evidence type="ECO:0000250" key="1">
    <source>
        <dbReference type="UniProtKB" id="D0VWV4"/>
    </source>
</evidence>
<evidence type="ECO:0000250" key="2">
    <source>
        <dbReference type="UniProtKB" id="Q99643"/>
    </source>
</evidence>
<evidence type="ECO:0000269" key="3">
    <source>
    </source>
</evidence>
<evidence type="ECO:0000269" key="4">
    <source>
    </source>
</evidence>
<evidence type="ECO:0000269" key="5">
    <source>
    </source>
</evidence>
<evidence type="ECO:0000269" key="6">
    <source>
    </source>
</evidence>
<evidence type="ECO:0000305" key="7"/>
<gene>
    <name type="primary">SDHC</name>
    <name type="synonym">CYB560</name>
</gene>
<comment type="function">
    <text evidence="2 3 4">Membrane-anchoring subunit of succinate dehydrogenase (SDH) that is involved in complex II of the mitochondrial electron transport chain and is responsible for transferring electrons from succinate to ubiquinone (coenzyme Q) (By similarity). SDH also oxidizes malate to the non-canonical enol form of oxaloacetate, enol-oxaloacetate (PubMed:1864383, PubMed:2902878). Enol-oxaloacetate, which is a potent inhibitor of the succinate dehydrogenase activity, is further isomerized into keto-oxaloacetate (PubMed:2902878).</text>
</comment>
<comment type="cofactor">
    <cofactor evidence="2">
        <name>heme b</name>
        <dbReference type="ChEBI" id="CHEBI:60344"/>
    </cofactor>
    <text evidence="2">The heme b is bound between the two transmembrane subunits SDHC and SDHD.</text>
</comment>
<comment type="pathway">
    <text evidence="2">Carbohydrate metabolism; tricarboxylic acid cycle.</text>
</comment>
<comment type="subunit">
    <text evidence="2">Component of complex II composed of four subunits: the flavoprotein (FP) SDHA, iron-sulfur protein (IP) SDHB, and a cytochrome b560 composed of SDHC and SDHD.</text>
</comment>
<comment type="subcellular location">
    <subcellularLocation>
        <location evidence="2">Mitochondrion inner membrane</location>
        <topology evidence="2">Multi-pass membrane protein</topology>
    </subcellularLocation>
</comment>
<comment type="PTM">
    <text evidence="5">The N-terminus is blocked.</text>
</comment>
<comment type="similarity">
    <text evidence="7">Belongs to the cytochrome b560 family.</text>
</comment>
<accession>P35720</accession>
<accession>Q1JP77</accession>
<accession>Q3T194</accession>
<accession>Q9T2T6</accession>